<protein>
    <recommendedName>
        <fullName evidence="1">Methylglyoxal synthase</fullName>
        <shortName evidence="1">MGS</shortName>
        <ecNumber evidence="1">4.2.3.3</ecNumber>
    </recommendedName>
</protein>
<accession>B0K427</accession>
<proteinExistence type="inferred from homology"/>
<comment type="function">
    <text evidence="1">Catalyzes the formation of methylglyoxal from dihydroxyacetone phosphate.</text>
</comment>
<comment type="catalytic activity">
    <reaction evidence="1">
        <text>dihydroxyacetone phosphate = methylglyoxal + phosphate</text>
        <dbReference type="Rhea" id="RHEA:17937"/>
        <dbReference type="ChEBI" id="CHEBI:17158"/>
        <dbReference type="ChEBI" id="CHEBI:43474"/>
        <dbReference type="ChEBI" id="CHEBI:57642"/>
        <dbReference type="EC" id="4.2.3.3"/>
    </reaction>
</comment>
<comment type="similarity">
    <text evidence="1">Belongs to the methylglyoxal synthase family.</text>
</comment>
<dbReference type="EC" id="4.2.3.3" evidence="1"/>
<dbReference type="EMBL" id="CP000923">
    <property type="protein sequence ID" value="ABY93398.1"/>
    <property type="molecule type" value="Genomic_DNA"/>
</dbReference>
<dbReference type="RefSeq" id="WP_009052621.1">
    <property type="nucleotide sequence ID" value="NC_010320.1"/>
</dbReference>
<dbReference type="SMR" id="B0K427"/>
<dbReference type="KEGG" id="tex:Teth514_2126"/>
<dbReference type="HOGENOM" id="CLU_120420_1_0_9"/>
<dbReference type="Proteomes" id="UP000002155">
    <property type="component" value="Chromosome"/>
</dbReference>
<dbReference type="GO" id="GO:0005829">
    <property type="term" value="C:cytosol"/>
    <property type="evidence" value="ECO:0007669"/>
    <property type="project" value="TreeGrafter"/>
</dbReference>
<dbReference type="GO" id="GO:0008929">
    <property type="term" value="F:methylglyoxal synthase activity"/>
    <property type="evidence" value="ECO:0007669"/>
    <property type="project" value="UniProtKB-UniRule"/>
</dbReference>
<dbReference type="GO" id="GO:0019242">
    <property type="term" value="P:methylglyoxal biosynthetic process"/>
    <property type="evidence" value="ECO:0007669"/>
    <property type="project" value="UniProtKB-UniRule"/>
</dbReference>
<dbReference type="CDD" id="cd01422">
    <property type="entry name" value="MGS"/>
    <property type="match status" value="1"/>
</dbReference>
<dbReference type="Gene3D" id="3.40.50.1380">
    <property type="entry name" value="Methylglyoxal synthase-like domain"/>
    <property type="match status" value="1"/>
</dbReference>
<dbReference type="HAMAP" id="MF_00549">
    <property type="entry name" value="Methylglyoxal_synth"/>
    <property type="match status" value="1"/>
</dbReference>
<dbReference type="InterPro" id="IPR004363">
    <property type="entry name" value="Methylgl_synth"/>
</dbReference>
<dbReference type="InterPro" id="IPR018148">
    <property type="entry name" value="Methylglyoxal_synth_AS"/>
</dbReference>
<dbReference type="InterPro" id="IPR011607">
    <property type="entry name" value="MGS-like_dom"/>
</dbReference>
<dbReference type="InterPro" id="IPR036914">
    <property type="entry name" value="MGS-like_dom_sf"/>
</dbReference>
<dbReference type="NCBIfam" id="TIGR00160">
    <property type="entry name" value="MGSA"/>
    <property type="match status" value="1"/>
</dbReference>
<dbReference type="NCBIfam" id="NF003559">
    <property type="entry name" value="PRK05234.1"/>
    <property type="match status" value="1"/>
</dbReference>
<dbReference type="PANTHER" id="PTHR30492">
    <property type="entry name" value="METHYLGLYOXAL SYNTHASE"/>
    <property type="match status" value="1"/>
</dbReference>
<dbReference type="PANTHER" id="PTHR30492:SF0">
    <property type="entry name" value="METHYLGLYOXAL SYNTHASE"/>
    <property type="match status" value="1"/>
</dbReference>
<dbReference type="Pfam" id="PF02142">
    <property type="entry name" value="MGS"/>
    <property type="match status" value="1"/>
</dbReference>
<dbReference type="PIRSF" id="PIRSF006614">
    <property type="entry name" value="Methylglyox_syn"/>
    <property type="match status" value="1"/>
</dbReference>
<dbReference type="SMART" id="SM00851">
    <property type="entry name" value="MGS"/>
    <property type="match status" value="1"/>
</dbReference>
<dbReference type="SUPFAM" id="SSF52335">
    <property type="entry name" value="Methylglyoxal synthase-like"/>
    <property type="match status" value="1"/>
</dbReference>
<dbReference type="PROSITE" id="PS01335">
    <property type="entry name" value="METHYLGLYOXAL_SYNTH"/>
    <property type="match status" value="1"/>
</dbReference>
<dbReference type="PROSITE" id="PS51855">
    <property type="entry name" value="MGS"/>
    <property type="match status" value="1"/>
</dbReference>
<gene>
    <name evidence="1" type="primary">mgsA</name>
    <name type="ordered locus">Teth514_2126</name>
</gene>
<reference key="1">
    <citation type="submission" date="2008-01" db="EMBL/GenBank/DDBJ databases">
        <title>Complete sequence of Thermoanaerobacter sp. X514.</title>
        <authorList>
            <consortium name="US DOE Joint Genome Institute"/>
            <person name="Copeland A."/>
            <person name="Lucas S."/>
            <person name="Lapidus A."/>
            <person name="Barry K."/>
            <person name="Glavina del Rio T."/>
            <person name="Dalin E."/>
            <person name="Tice H."/>
            <person name="Pitluck S."/>
            <person name="Bruce D."/>
            <person name="Goodwin L."/>
            <person name="Saunders E."/>
            <person name="Brettin T."/>
            <person name="Detter J.C."/>
            <person name="Han C."/>
            <person name="Schmutz J."/>
            <person name="Larimer F."/>
            <person name="Land M."/>
            <person name="Hauser L."/>
            <person name="Kyrpides N."/>
            <person name="Kim E."/>
            <person name="Hemme C."/>
            <person name="Fields M.W."/>
            <person name="He Z."/>
            <person name="Zhou J."/>
            <person name="Richardson P."/>
        </authorList>
    </citation>
    <scope>NUCLEOTIDE SEQUENCE [LARGE SCALE GENOMIC DNA]</scope>
    <source>
        <strain>X514</strain>
    </source>
</reference>
<feature type="chain" id="PRO_1000129012" description="Methylglyoxal synthase">
    <location>
        <begin position="1"/>
        <end position="132"/>
    </location>
</feature>
<feature type="domain" description="MGS-like" evidence="1">
    <location>
        <begin position="1"/>
        <end position="132"/>
    </location>
</feature>
<feature type="active site" description="Proton donor/acceptor" evidence="1">
    <location>
        <position position="60"/>
    </location>
</feature>
<feature type="binding site" evidence="1">
    <location>
        <position position="8"/>
    </location>
    <ligand>
        <name>substrate</name>
    </ligand>
</feature>
<feature type="binding site" evidence="1">
    <location>
        <position position="12"/>
    </location>
    <ligand>
        <name>substrate</name>
    </ligand>
</feature>
<feature type="binding site" evidence="1">
    <location>
        <position position="87"/>
    </location>
    <ligand>
        <name>substrate</name>
    </ligand>
</feature>
<keyword id="KW-0456">Lyase</keyword>
<name>MGSA_THEPX</name>
<sequence>MNIALIAHDQKKELMVNFAIAYKHIFEKCNIYATGHTGQLIKEATGLNVNCLLPGPLGGDQQIGAMIAENKIDMVIFLRDPLTAQPHEPDILALLRVCDVHSIPLATNIATAEVLLKGMEQGLLEWREIEDK</sequence>
<organism>
    <name type="scientific">Thermoanaerobacter sp. (strain X514)</name>
    <dbReference type="NCBI Taxonomy" id="399726"/>
    <lineage>
        <taxon>Bacteria</taxon>
        <taxon>Bacillati</taxon>
        <taxon>Bacillota</taxon>
        <taxon>Clostridia</taxon>
        <taxon>Thermoanaerobacterales</taxon>
        <taxon>Thermoanaerobacteraceae</taxon>
        <taxon>Thermoanaerobacter</taxon>
    </lineage>
</organism>
<evidence type="ECO:0000255" key="1">
    <source>
        <dbReference type="HAMAP-Rule" id="MF_00549"/>
    </source>
</evidence>